<accession>C0H458</accession>
<reference key="1">
    <citation type="journal article" date="1997" name="Nature">
        <title>The complete genome sequence of the Gram-positive bacterium Bacillus subtilis.</title>
        <authorList>
            <person name="Kunst F."/>
            <person name="Ogasawara N."/>
            <person name="Moszer I."/>
            <person name="Albertini A.M."/>
            <person name="Alloni G."/>
            <person name="Azevedo V."/>
            <person name="Bertero M.G."/>
            <person name="Bessieres P."/>
            <person name="Bolotin A."/>
            <person name="Borchert S."/>
            <person name="Borriss R."/>
            <person name="Boursier L."/>
            <person name="Brans A."/>
            <person name="Braun M."/>
            <person name="Brignell S.C."/>
            <person name="Bron S."/>
            <person name="Brouillet S."/>
            <person name="Bruschi C.V."/>
            <person name="Caldwell B."/>
            <person name="Capuano V."/>
            <person name="Carter N.M."/>
            <person name="Choi S.-K."/>
            <person name="Codani J.-J."/>
            <person name="Connerton I.F."/>
            <person name="Cummings N.J."/>
            <person name="Daniel R.A."/>
            <person name="Denizot F."/>
            <person name="Devine K.M."/>
            <person name="Duesterhoeft A."/>
            <person name="Ehrlich S.D."/>
            <person name="Emmerson P.T."/>
            <person name="Entian K.-D."/>
            <person name="Errington J."/>
            <person name="Fabret C."/>
            <person name="Ferrari E."/>
            <person name="Foulger D."/>
            <person name="Fritz C."/>
            <person name="Fujita M."/>
            <person name="Fujita Y."/>
            <person name="Fuma S."/>
            <person name="Galizzi A."/>
            <person name="Galleron N."/>
            <person name="Ghim S.-Y."/>
            <person name="Glaser P."/>
            <person name="Goffeau A."/>
            <person name="Golightly E.J."/>
            <person name="Grandi G."/>
            <person name="Guiseppi G."/>
            <person name="Guy B.J."/>
            <person name="Haga K."/>
            <person name="Haiech J."/>
            <person name="Harwood C.R."/>
            <person name="Henaut A."/>
            <person name="Hilbert H."/>
            <person name="Holsappel S."/>
            <person name="Hosono S."/>
            <person name="Hullo M.-F."/>
            <person name="Itaya M."/>
            <person name="Jones L.-M."/>
            <person name="Joris B."/>
            <person name="Karamata D."/>
            <person name="Kasahara Y."/>
            <person name="Klaerr-Blanchard M."/>
            <person name="Klein C."/>
            <person name="Kobayashi Y."/>
            <person name="Koetter P."/>
            <person name="Koningstein G."/>
            <person name="Krogh S."/>
            <person name="Kumano M."/>
            <person name="Kurita K."/>
            <person name="Lapidus A."/>
            <person name="Lardinois S."/>
            <person name="Lauber J."/>
            <person name="Lazarevic V."/>
            <person name="Lee S.-M."/>
            <person name="Levine A."/>
            <person name="Liu H."/>
            <person name="Masuda S."/>
            <person name="Mauel C."/>
            <person name="Medigue C."/>
            <person name="Medina N."/>
            <person name="Mellado R.P."/>
            <person name="Mizuno M."/>
            <person name="Moestl D."/>
            <person name="Nakai S."/>
            <person name="Noback M."/>
            <person name="Noone D."/>
            <person name="O'Reilly M."/>
            <person name="Ogawa K."/>
            <person name="Ogiwara A."/>
            <person name="Oudega B."/>
            <person name="Park S.-H."/>
            <person name="Parro V."/>
            <person name="Pohl T.M."/>
            <person name="Portetelle D."/>
            <person name="Porwollik S."/>
            <person name="Prescott A.M."/>
            <person name="Presecan E."/>
            <person name="Pujic P."/>
            <person name="Purnelle B."/>
            <person name="Rapoport G."/>
            <person name="Rey M."/>
            <person name="Reynolds S."/>
            <person name="Rieger M."/>
            <person name="Rivolta C."/>
            <person name="Rocha E."/>
            <person name="Roche B."/>
            <person name="Rose M."/>
            <person name="Sadaie Y."/>
            <person name="Sato T."/>
            <person name="Scanlan E."/>
            <person name="Schleich S."/>
            <person name="Schroeter R."/>
            <person name="Scoffone F."/>
            <person name="Sekiguchi J."/>
            <person name="Sekowska A."/>
            <person name="Seror S.J."/>
            <person name="Serror P."/>
            <person name="Shin B.-S."/>
            <person name="Soldo B."/>
            <person name="Sorokin A."/>
            <person name="Tacconi E."/>
            <person name="Takagi T."/>
            <person name="Takahashi H."/>
            <person name="Takemaru K."/>
            <person name="Takeuchi M."/>
            <person name="Tamakoshi A."/>
            <person name="Tanaka T."/>
            <person name="Terpstra P."/>
            <person name="Tognoni A."/>
            <person name="Tosato V."/>
            <person name="Uchiyama S."/>
            <person name="Vandenbol M."/>
            <person name="Vannier F."/>
            <person name="Vassarotti A."/>
            <person name="Viari A."/>
            <person name="Wambutt R."/>
            <person name="Wedler E."/>
            <person name="Wedler H."/>
            <person name="Weitzenegger T."/>
            <person name="Winters P."/>
            <person name="Wipat A."/>
            <person name="Yamamoto H."/>
            <person name="Yamane K."/>
            <person name="Yasumoto K."/>
            <person name="Yata K."/>
            <person name="Yoshida K."/>
            <person name="Yoshikawa H.-F."/>
            <person name="Zumstein E."/>
            <person name="Yoshikawa H."/>
            <person name="Danchin A."/>
        </authorList>
    </citation>
    <scope>NUCLEOTIDE SEQUENCE [LARGE SCALE GENOMIC DNA]</scope>
    <source>
        <strain>168</strain>
    </source>
</reference>
<dbReference type="EMBL" id="AL009126">
    <property type="protein sequence ID" value="CAX52668.1"/>
    <property type="molecule type" value="Genomic_DNA"/>
</dbReference>
<dbReference type="RefSeq" id="WP_003229877.1">
    <property type="nucleotide sequence ID" value="NZ_OZ025638.1"/>
</dbReference>
<dbReference type="RefSeq" id="YP_003097765.1">
    <property type="nucleotide sequence ID" value="NC_000964.3"/>
</dbReference>
<dbReference type="SMR" id="C0H458"/>
<dbReference type="FunCoup" id="C0H458">
    <property type="interactions" value="1"/>
</dbReference>
<dbReference type="STRING" id="224308.BSU26619"/>
<dbReference type="PaxDb" id="224308-BSU26619"/>
<dbReference type="EnsemblBacteria" id="CAX52668">
    <property type="protein sequence ID" value="CAX52668"/>
    <property type="gene ID" value="BSU_26619"/>
</dbReference>
<dbReference type="GeneID" id="8303041"/>
<dbReference type="KEGG" id="bsu:BSU26619"/>
<dbReference type="PATRIC" id="fig|224308.179.peg.2892"/>
<dbReference type="eggNOG" id="ENOG5030EJC">
    <property type="taxonomic scope" value="Bacteria"/>
</dbReference>
<dbReference type="InParanoid" id="C0H458"/>
<dbReference type="OrthoDB" id="2738636at2"/>
<dbReference type="BioCyc" id="BSUB:BSU26619-MONOMER"/>
<dbReference type="Proteomes" id="UP000001570">
    <property type="component" value="Chromosome"/>
</dbReference>
<dbReference type="InterPro" id="IPR025417">
    <property type="entry name" value="YrzO-like"/>
</dbReference>
<dbReference type="Pfam" id="PF14142">
    <property type="entry name" value="YrzO"/>
    <property type="match status" value="1"/>
</dbReference>
<gene>
    <name type="primary">yrzO</name>
    <name type="ordered locus">BSU26619</name>
</gene>
<name>YRZO_BACSU</name>
<feature type="chain" id="PRO_0000380084" description="Uncharacterized protein YrzO">
    <location>
        <begin position="1"/>
        <end position="47"/>
    </location>
</feature>
<sequence>MFEGLLFFISAGIVCELAAINRNGRKNIKQQAELIQILKENLYKDIK</sequence>
<protein>
    <recommendedName>
        <fullName>Uncharacterized protein YrzO</fullName>
    </recommendedName>
</protein>
<keyword id="KW-1185">Reference proteome</keyword>
<proteinExistence type="predicted"/>
<organism>
    <name type="scientific">Bacillus subtilis (strain 168)</name>
    <dbReference type="NCBI Taxonomy" id="224308"/>
    <lineage>
        <taxon>Bacteria</taxon>
        <taxon>Bacillati</taxon>
        <taxon>Bacillota</taxon>
        <taxon>Bacilli</taxon>
        <taxon>Bacillales</taxon>
        <taxon>Bacillaceae</taxon>
        <taxon>Bacillus</taxon>
    </lineage>
</organism>